<gene>
    <name evidence="1" type="primary">rpmG</name>
    <name type="ordered locus">Haur_0119</name>
</gene>
<feature type="chain" id="PRO_0000356484" description="Large ribosomal subunit protein bL33">
    <location>
        <begin position="1"/>
        <end position="54"/>
    </location>
</feature>
<keyword id="KW-0687">Ribonucleoprotein</keyword>
<keyword id="KW-0689">Ribosomal protein</keyword>
<name>RL33_HERA2</name>
<protein>
    <recommendedName>
        <fullName evidence="1">Large ribosomal subunit protein bL33</fullName>
    </recommendedName>
    <alternativeName>
        <fullName evidence="2">50S ribosomal protein L33</fullName>
    </alternativeName>
</protein>
<proteinExistence type="inferred from homology"/>
<dbReference type="EMBL" id="CP000875">
    <property type="protein sequence ID" value="ABX02771.1"/>
    <property type="status" value="ALT_INIT"/>
    <property type="molecule type" value="Genomic_DNA"/>
</dbReference>
<dbReference type="SMR" id="A9B5E6"/>
<dbReference type="FunCoup" id="A9B5E6">
    <property type="interactions" value="169"/>
</dbReference>
<dbReference type="STRING" id="316274.Haur_0119"/>
<dbReference type="KEGG" id="hau:Haur_0119"/>
<dbReference type="eggNOG" id="COG0267">
    <property type="taxonomic scope" value="Bacteria"/>
</dbReference>
<dbReference type="HOGENOM" id="CLU_190949_0_1_0"/>
<dbReference type="InParanoid" id="A9B5E6"/>
<dbReference type="Proteomes" id="UP000000787">
    <property type="component" value="Chromosome"/>
</dbReference>
<dbReference type="GO" id="GO:0005737">
    <property type="term" value="C:cytoplasm"/>
    <property type="evidence" value="ECO:0007669"/>
    <property type="project" value="UniProtKB-ARBA"/>
</dbReference>
<dbReference type="GO" id="GO:1990904">
    <property type="term" value="C:ribonucleoprotein complex"/>
    <property type="evidence" value="ECO:0007669"/>
    <property type="project" value="UniProtKB-KW"/>
</dbReference>
<dbReference type="GO" id="GO:0005840">
    <property type="term" value="C:ribosome"/>
    <property type="evidence" value="ECO:0007669"/>
    <property type="project" value="UniProtKB-KW"/>
</dbReference>
<dbReference type="GO" id="GO:0003735">
    <property type="term" value="F:structural constituent of ribosome"/>
    <property type="evidence" value="ECO:0007669"/>
    <property type="project" value="InterPro"/>
</dbReference>
<dbReference type="GO" id="GO:0006412">
    <property type="term" value="P:translation"/>
    <property type="evidence" value="ECO:0007669"/>
    <property type="project" value="UniProtKB-UniRule"/>
</dbReference>
<dbReference type="Gene3D" id="2.20.28.120">
    <property type="entry name" value="Ribosomal protein L33"/>
    <property type="match status" value="1"/>
</dbReference>
<dbReference type="HAMAP" id="MF_00294">
    <property type="entry name" value="Ribosomal_bL33"/>
    <property type="match status" value="1"/>
</dbReference>
<dbReference type="InterPro" id="IPR001705">
    <property type="entry name" value="Ribosomal_bL33"/>
</dbReference>
<dbReference type="InterPro" id="IPR018264">
    <property type="entry name" value="Ribosomal_bL33_CS"/>
</dbReference>
<dbReference type="InterPro" id="IPR038584">
    <property type="entry name" value="Ribosomal_bL33_sf"/>
</dbReference>
<dbReference type="InterPro" id="IPR011332">
    <property type="entry name" value="Ribosomal_zn-bd"/>
</dbReference>
<dbReference type="NCBIfam" id="NF001764">
    <property type="entry name" value="PRK00504.1"/>
    <property type="match status" value="1"/>
</dbReference>
<dbReference type="NCBIfam" id="NF001860">
    <property type="entry name" value="PRK00595.1"/>
    <property type="match status" value="1"/>
</dbReference>
<dbReference type="NCBIfam" id="TIGR01023">
    <property type="entry name" value="rpmG_bact"/>
    <property type="match status" value="1"/>
</dbReference>
<dbReference type="PANTHER" id="PTHR43168">
    <property type="entry name" value="50S RIBOSOMAL PROTEIN L33, CHLOROPLASTIC"/>
    <property type="match status" value="1"/>
</dbReference>
<dbReference type="PANTHER" id="PTHR43168:SF2">
    <property type="entry name" value="LARGE RIBOSOMAL SUBUNIT PROTEIN BL33C"/>
    <property type="match status" value="1"/>
</dbReference>
<dbReference type="Pfam" id="PF00471">
    <property type="entry name" value="Ribosomal_L33"/>
    <property type="match status" value="1"/>
</dbReference>
<dbReference type="SUPFAM" id="SSF57829">
    <property type="entry name" value="Zn-binding ribosomal proteins"/>
    <property type="match status" value="1"/>
</dbReference>
<dbReference type="PROSITE" id="PS00582">
    <property type="entry name" value="RIBOSOMAL_L33"/>
    <property type="match status" value="1"/>
</dbReference>
<evidence type="ECO:0000255" key="1">
    <source>
        <dbReference type="HAMAP-Rule" id="MF_00294"/>
    </source>
</evidence>
<evidence type="ECO:0000305" key="2"/>
<organism>
    <name type="scientific">Herpetosiphon aurantiacus (strain ATCC 23779 / DSM 785 / 114-95)</name>
    <dbReference type="NCBI Taxonomy" id="316274"/>
    <lineage>
        <taxon>Bacteria</taxon>
        <taxon>Bacillati</taxon>
        <taxon>Chloroflexota</taxon>
        <taxon>Chloroflexia</taxon>
        <taxon>Herpetosiphonales</taxon>
        <taxon>Herpetosiphonaceae</taxon>
        <taxon>Herpetosiphon</taxon>
    </lineage>
</organism>
<reference key="1">
    <citation type="journal article" date="2011" name="Stand. Genomic Sci.">
        <title>Complete genome sequence of the filamentous gliding predatory bacterium Herpetosiphon aurantiacus type strain (114-95(T)).</title>
        <authorList>
            <person name="Kiss H."/>
            <person name="Nett M."/>
            <person name="Domin N."/>
            <person name="Martin K."/>
            <person name="Maresca J.A."/>
            <person name="Copeland A."/>
            <person name="Lapidus A."/>
            <person name="Lucas S."/>
            <person name="Berry K.W."/>
            <person name="Glavina Del Rio T."/>
            <person name="Dalin E."/>
            <person name="Tice H."/>
            <person name="Pitluck S."/>
            <person name="Richardson P."/>
            <person name="Bruce D."/>
            <person name="Goodwin L."/>
            <person name="Han C."/>
            <person name="Detter J.C."/>
            <person name="Schmutz J."/>
            <person name="Brettin T."/>
            <person name="Land M."/>
            <person name="Hauser L."/>
            <person name="Kyrpides N.C."/>
            <person name="Ivanova N."/>
            <person name="Goeker M."/>
            <person name="Woyke T."/>
            <person name="Klenk H.P."/>
            <person name="Bryant D.A."/>
        </authorList>
    </citation>
    <scope>NUCLEOTIDE SEQUENCE [LARGE SCALE GENOMIC DNA]</scope>
    <source>
        <strain>ATCC 23779 / DSM 785 / 114-95</strain>
    </source>
</reference>
<comment type="similarity">
    <text evidence="1">Belongs to the bacterial ribosomal protein bL33 family.</text>
</comment>
<comment type="sequence caution" evidence="2">
    <conflict type="erroneous initiation">
        <sequence resource="EMBL-CDS" id="ABX02771"/>
    </conflict>
</comment>
<accession>A9B5E6</accession>
<sequence length="54" mass="6514">MAKKENRIVITLACTECGDRNYTTTKNRKNDTNRLELMKYCPRLRKRTLHRETK</sequence>